<reference evidence="5" key="1">
    <citation type="journal article" date="2000" name="Biochem. Biophys. Res. Commun.">
        <title>Growth suppression of Escherichia coli by induction of expression of mammalian genes with transmembrane or ATPase domains.</title>
        <authorList>
            <person name="Inoue S."/>
            <person name="Sano H."/>
            <person name="Ohta M."/>
        </authorList>
    </citation>
    <scope>NUCLEOTIDE SEQUENCE [MRNA]</scope>
    <source>
        <tissue evidence="5">Brain</tissue>
    </source>
</reference>
<reference key="2">
    <citation type="journal article" date="2005" name="Science">
        <title>The transcriptional landscape of the mammalian genome.</title>
        <authorList>
            <person name="Carninci P."/>
            <person name="Kasukawa T."/>
            <person name="Katayama S."/>
            <person name="Gough J."/>
            <person name="Frith M.C."/>
            <person name="Maeda N."/>
            <person name="Oyama R."/>
            <person name="Ravasi T."/>
            <person name="Lenhard B."/>
            <person name="Wells C."/>
            <person name="Kodzius R."/>
            <person name="Shimokawa K."/>
            <person name="Bajic V.B."/>
            <person name="Brenner S.E."/>
            <person name="Batalov S."/>
            <person name="Forrest A.R."/>
            <person name="Zavolan M."/>
            <person name="Davis M.J."/>
            <person name="Wilming L.G."/>
            <person name="Aidinis V."/>
            <person name="Allen J.E."/>
            <person name="Ambesi-Impiombato A."/>
            <person name="Apweiler R."/>
            <person name="Aturaliya R.N."/>
            <person name="Bailey T.L."/>
            <person name="Bansal M."/>
            <person name="Baxter L."/>
            <person name="Beisel K.W."/>
            <person name="Bersano T."/>
            <person name="Bono H."/>
            <person name="Chalk A.M."/>
            <person name="Chiu K.P."/>
            <person name="Choudhary V."/>
            <person name="Christoffels A."/>
            <person name="Clutterbuck D.R."/>
            <person name="Crowe M.L."/>
            <person name="Dalla E."/>
            <person name="Dalrymple B.P."/>
            <person name="de Bono B."/>
            <person name="Della Gatta G."/>
            <person name="di Bernardo D."/>
            <person name="Down T."/>
            <person name="Engstrom P."/>
            <person name="Fagiolini M."/>
            <person name="Faulkner G."/>
            <person name="Fletcher C.F."/>
            <person name="Fukushima T."/>
            <person name="Furuno M."/>
            <person name="Futaki S."/>
            <person name="Gariboldi M."/>
            <person name="Georgii-Hemming P."/>
            <person name="Gingeras T.R."/>
            <person name="Gojobori T."/>
            <person name="Green R.E."/>
            <person name="Gustincich S."/>
            <person name="Harbers M."/>
            <person name="Hayashi Y."/>
            <person name="Hensch T.K."/>
            <person name="Hirokawa N."/>
            <person name="Hill D."/>
            <person name="Huminiecki L."/>
            <person name="Iacono M."/>
            <person name="Ikeo K."/>
            <person name="Iwama A."/>
            <person name="Ishikawa T."/>
            <person name="Jakt M."/>
            <person name="Kanapin A."/>
            <person name="Katoh M."/>
            <person name="Kawasawa Y."/>
            <person name="Kelso J."/>
            <person name="Kitamura H."/>
            <person name="Kitano H."/>
            <person name="Kollias G."/>
            <person name="Krishnan S.P."/>
            <person name="Kruger A."/>
            <person name="Kummerfeld S.K."/>
            <person name="Kurochkin I.V."/>
            <person name="Lareau L.F."/>
            <person name="Lazarevic D."/>
            <person name="Lipovich L."/>
            <person name="Liu J."/>
            <person name="Liuni S."/>
            <person name="McWilliam S."/>
            <person name="Madan Babu M."/>
            <person name="Madera M."/>
            <person name="Marchionni L."/>
            <person name="Matsuda H."/>
            <person name="Matsuzawa S."/>
            <person name="Miki H."/>
            <person name="Mignone F."/>
            <person name="Miyake S."/>
            <person name="Morris K."/>
            <person name="Mottagui-Tabar S."/>
            <person name="Mulder N."/>
            <person name="Nakano N."/>
            <person name="Nakauchi H."/>
            <person name="Ng P."/>
            <person name="Nilsson R."/>
            <person name="Nishiguchi S."/>
            <person name="Nishikawa S."/>
            <person name="Nori F."/>
            <person name="Ohara O."/>
            <person name="Okazaki Y."/>
            <person name="Orlando V."/>
            <person name="Pang K.C."/>
            <person name="Pavan W.J."/>
            <person name="Pavesi G."/>
            <person name="Pesole G."/>
            <person name="Petrovsky N."/>
            <person name="Piazza S."/>
            <person name="Reed J."/>
            <person name="Reid J.F."/>
            <person name="Ring B.Z."/>
            <person name="Ringwald M."/>
            <person name="Rost B."/>
            <person name="Ruan Y."/>
            <person name="Salzberg S.L."/>
            <person name="Sandelin A."/>
            <person name="Schneider C."/>
            <person name="Schoenbach C."/>
            <person name="Sekiguchi K."/>
            <person name="Semple C.A."/>
            <person name="Seno S."/>
            <person name="Sessa L."/>
            <person name="Sheng Y."/>
            <person name="Shibata Y."/>
            <person name="Shimada H."/>
            <person name="Shimada K."/>
            <person name="Silva D."/>
            <person name="Sinclair B."/>
            <person name="Sperling S."/>
            <person name="Stupka E."/>
            <person name="Sugiura K."/>
            <person name="Sultana R."/>
            <person name="Takenaka Y."/>
            <person name="Taki K."/>
            <person name="Tammoja K."/>
            <person name="Tan S.L."/>
            <person name="Tang S."/>
            <person name="Taylor M.S."/>
            <person name="Tegner J."/>
            <person name="Teichmann S.A."/>
            <person name="Ueda H.R."/>
            <person name="van Nimwegen E."/>
            <person name="Verardo R."/>
            <person name="Wei C.L."/>
            <person name="Yagi K."/>
            <person name="Yamanishi H."/>
            <person name="Zabarovsky E."/>
            <person name="Zhu S."/>
            <person name="Zimmer A."/>
            <person name="Hide W."/>
            <person name="Bult C."/>
            <person name="Grimmond S.M."/>
            <person name="Teasdale R.D."/>
            <person name="Liu E.T."/>
            <person name="Brusic V."/>
            <person name="Quackenbush J."/>
            <person name="Wahlestedt C."/>
            <person name="Mattick J.S."/>
            <person name="Hume D.A."/>
            <person name="Kai C."/>
            <person name="Sasaki D."/>
            <person name="Tomaru Y."/>
            <person name="Fukuda S."/>
            <person name="Kanamori-Katayama M."/>
            <person name="Suzuki M."/>
            <person name="Aoki J."/>
            <person name="Arakawa T."/>
            <person name="Iida J."/>
            <person name="Imamura K."/>
            <person name="Itoh M."/>
            <person name="Kato T."/>
            <person name="Kawaji H."/>
            <person name="Kawagashira N."/>
            <person name="Kawashima T."/>
            <person name="Kojima M."/>
            <person name="Kondo S."/>
            <person name="Konno H."/>
            <person name="Nakano K."/>
            <person name="Ninomiya N."/>
            <person name="Nishio T."/>
            <person name="Okada M."/>
            <person name="Plessy C."/>
            <person name="Shibata K."/>
            <person name="Shiraki T."/>
            <person name="Suzuki S."/>
            <person name="Tagami M."/>
            <person name="Waki K."/>
            <person name="Watahiki A."/>
            <person name="Okamura-Oho Y."/>
            <person name="Suzuki H."/>
            <person name="Kawai J."/>
            <person name="Hayashizaki Y."/>
        </authorList>
    </citation>
    <scope>NUCLEOTIDE SEQUENCE [LARGE SCALE MRNA]</scope>
    <source>
        <strain>C57BL/6J</strain>
        <tissue>Brain cortex</tissue>
        <tissue>Embryonic stem cell</tissue>
        <tissue>Kidney</tissue>
        <tissue>Oviduct</tissue>
    </source>
</reference>
<reference evidence="3" key="3">
    <citation type="journal article" date="2004" name="Genome Res.">
        <title>The status, quality, and expansion of the NIH full-length cDNA project: the Mammalian Gene Collection (MGC).</title>
        <authorList>
            <consortium name="The MGC Project Team"/>
        </authorList>
    </citation>
    <scope>NUCLEOTIDE SEQUENCE [LARGE SCALE MRNA]</scope>
    <source>
        <strain evidence="4">FVB/N</strain>
        <tissue evidence="4">Kidney</tissue>
    </source>
</reference>
<reference evidence="3" key="4">
    <citation type="journal article" date="2002" name="J. Biol. Chem.">
        <title>Identification and characterization of a cDNA encoding a dolichyl pyrophosphate phosphatase located in the endoplasmic reticulum of mammalian cells.</title>
        <authorList>
            <person name="Rush J.S."/>
            <person name="Cho S.K."/>
            <person name="Jiang S."/>
            <person name="Hofmann S.L."/>
            <person name="Waechter C.J."/>
        </authorList>
    </citation>
    <scope>FUNCTION</scope>
    <scope>SUBCELLULAR LOCATION</scope>
    <scope>TISSUE SPECIFICITY</scope>
</reference>
<keyword id="KW-0256">Endoplasmic reticulum</keyword>
<keyword id="KW-0378">Hydrolase</keyword>
<keyword id="KW-0472">Membrane</keyword>
<keyword id="KW-1185">Reference proteome</keyword>
<keyword id="KW-0812">Transmembrane</keyword>
<keyword id="KW-1133">Transmembrane helix</keyword>
<sequence length="238" mass="27099">MAADGQCSLPASWRPVTLTHVEYPAGDLSGHLLAYLSLSPIFVVVGFLTLIIFKRELHTISFLGGLALNQGVNWLIKHVIQEPRPCGGPHTAVGTKYGMPSSHSQFMWFFSVYSFLFLYLRMHQTNNARFLDLLWRHVLSLGLLTAAFLVSYSRVYLLYHTWSQVFYGGVAGSLMAVAWFIITQEILTPLFPRIAAWPISEFFLIRDTSLIPNVLWFEYTVTRAEARNRQRKLGTKLQ</sequence>
<accession>Q9JMF7</accession>
<accession>Q8BN02</accession>
<accession>Q8R0P7</accession>
<accession>Q9CRF2</accession>
<dbReference type="EC" id="3.6.1.43"/>
<dbReference type="EMBL" id="AB030189">
    <property type="protein sequence ID" value="BAA92753.1"/>
    <property type="molecule type" value="mRNA"/>
</dbReference>
<dbReference type="EMBL" id="AK002544">
    <property type="protein sequence ID" value="BAC24998.1"/>
    <property type="status" value="ALT_SEQ"/>
    <property type="molecule type" value="mRNA"/>
</dbReference>
<dbReference type="EMBL" id="AK010797">
    <property type="protein sequence ID" value="BAB27187.1"/>
    <property type="molecule type" value="mRNA"/>
</dbReference>
<dbReference type="EMBL" id="AK044141">
    <property type="protein sequence ID" value="BAC31797.1"/>
    <property type="molecule type" value="mRNA"/>
</dbReference>
<dbReference type="EMBL" id="AK053923">
    <property type="protein sequence ID" value="BAC35595.1"/>
    <property type="molecule type" value="mRNA"/>
</dbReference>
<dbReference type="EMBL" id="BC026544">
    <property type="protein sequence ID" value="AAH26544.1"/>
    <property type="molecule type" value="mRNA"/>
</dbReference>
<dbReference type="CCDS" id="CCDS15881.1"/>
<dbReference type="RefSeq" id="NP_001277437.1">
    <property type="nucleotide sequence ID" value="NM_001290508.1"/>
</dbReference>
<dbReference type="RefSeq" id="NP_001277438.1">
    <property type="nucleotide sequence ID" value="NM_001290509.1"/>
</dbReference>
<dbReference type="RefSeq" id="NP_065062.1">
    <property type="nucleotide sequence ID" value="NM_020329.5"/>
</dbReference>
<dbReference type="RefSeq" id="XP_006498270.1">
    <property type="nucleotide sequence ID" value="XM_006498207.3"/>
</dbReference>
<dbReference type="FunCoup" id="Q9JMF7">
    <property type="interactions" value="2195"/>
</dbReference>
<dbReference type="STRING" id="10090.ENSMUSP00000028209"/>
<dbReference type="PaxDb" id="10090-ENSMUSP00000028209"/>
<dbReference type="PeptideAtlas" id="Q9JMF7"/>
<dbReference type="ProteomicsDB" id="279472"/>
<dbReference type="Pumba" id="Q9JMF7"/>
<dbReference type="Antibodypedia" id="17806">
    <property type="antibodies" value="78 antibodies from 15 providers"/>
</dbReference>
<dbReference type="DNASU" id="57170"/>
<dbReference type="Ensembl" id="ENSMUST00000028209.15">
    <property type="protein sequence ID" value="ENSMUSP00000028209.9"/>
    <property type="gene ID" value="ENSMUSG00000026856.15"/>
</dbReference>
<dbReference type="GeneID" id="57170"/>
<dbReference type="KEGG" id="mmu:57170"/>
<dbReference type="UCSC" id="uc008jci.2">
    <property type="organism name" value="mouse"/>
</dbReference>
<dbReference type="AGR" id="MGI:1914093"/>
<dbReference type="CTD" id="57171"/>
<dbReference type="MGI" id="MGI:1914093">
    <property type="gene designation" value="Dolpp1"/>
</dbReference>
<dbReference type="VEuPathDB" id="HostDB:ENSMUSG00000026856"/>
<dbReference type="eggNOG" id="KOG3146">
    <property type="taxonomic scope" value="Eukaryota"/>
</dbReference>
<dbReference type="GeneTree" id="ENSGT00390000013112"/>
<dbReference type="HOGENOM" id="CLU_074922_1_2_1"/>
<dbReference type="InParanoid" id="Q9JMF7"/>
<dbReference type="OMA" id="VYATLIW"/>
<dbReference type="OrthoDB" id="302705at2759"/>
<dbReference type="PhylomeDB" id="Q9JMF7"/>
<dbReference type="TreeFam" id="TF323451"/>
<dbReference type="BRENDA" id="3.6.1.43">
    <property type="organism ID" value="3474"/>
</dbReference>
<dbReference type="Reactome" id="R-MMU-446199">
    <property type="pathway name" value="Synthesis of Dolichyl-phosphate"/>
</dbReference>
<dbReference type="UniPathway" id="UPA00378"/>
<dbReference type="BioGRID-ORCS" id="57170">
    <property type="hits" value="15 hits in 80 CRISPR screens"/>
</dbReference>
<dbReference type="ChiTaRS" id="Dolpp1">
    <property type="organism name" value="mouse"/>
</dbReference>
<dbReference type="PRO" id="PR:Q9JMF7"/>
<dbReference type="Proteomes" id="UP000000589">
    <property type="component" value="Chromosome 2"/>
</dbReference>
<dbReference type="RNAct" id="Q9JMF7">
    <property type="molecule type" value="protein"/>
</dbReference>
<dbReference type="Bgee" id="ENSMUSG00000026856">
    <property type="expression patterns" value="Expressed in ileal epithelium and 176 other cell types or tissues"/>
</dbReference>
<dbReference type="ExpressionAtlas" id="Q9JMF7">
    <property type="expression patterns" value="baseline and differential"/>
</dbReference>
<dbReference type="GO" id="GO:0005789">
    <property type="term" value="C:endoplasmic reticulum membrane"/>
    <property type="evidence" value="ECO:0000314"/>
    <property type="project" value="UniProtKB"/>
</dbReference>
<dbReference type="GO" id="GO:0047874">
    <property type="term" value="F:dolichyldiphosphatase activity"/>
    <property type="evidence" value="ECO:0000314"/>
    <property type="project" value="UniProtKB"/>
</dbReference>
<dbReference type="GO" id="GO:0006487">
    <property type="term" value="P:protein N-linked glycosylation"/>
    <property type="evidence" value="ECO:0000314"/>
    <property type="project" value="UniProtKB"/>
</dbReference>
<dbReference type="CDD" id="cd03382">
    <property type="entry name" value="PAP2_dolichyldiphosphatase"/>
    <property type="match status" value="1"/>
</dbReference>
<dbReference type="FunFam" id="1.20.144.10:FF:000003">
    <property type="entry name" value="Dolichyldiphosphatase 1"/>
    <property type="match status" value="1"/>
</dbReference>
<dbReference type="Gene3D" id="1.20.144.10">
    <property type="entry name" value="Phosphatidic acid phosphatase type 2/haloperoxidase"/>
    <property type="match status" value="1"/>
</dbReference>
<dbReference type="InterPro" id="IPR039667">
    <property type="entry name" value="Dolichyldiphosphatase_PAP2"/>
</dbReference>
<dbReference type="InterPro" id="IPR036938">
    <property type="entry name" value="P_Acid_Pase_2/haloperoxi_sf"/>
</dbReference>
<dbReference type="InterPro" id="IPR000326">
    <property type="entry name" value="P_Acid_Pase_2/haloperoxidase"/>
</dbReference>
<dbReference type="PANTHER" id="PTHR11247:SF1">
    <property type="entry name" value="DOLICHYLDIPHOSPHATASE 1"/>
    <property type="match status" value="1"/>
</dbReference>
<dbReference type="PANTHER" id="PTHR11247">
    <property type="entry name" value="PALMITOYL-PROTEIN THIOESTERASE/DOLICHYLDIPHOSPHATASE 1"/>
    <property type="match status" value="1"/>
</dbReference>
<dbReference type="Pfam" id="PF01569">
    <property type="entry name" value="PAP2"/>
    <property type="match status" value="1"/>
</dbReference>
<dbReference type="SMART" id="SM00014">
    <property type="entry name" value="acidPPc"/>
    <property type="match status" value="1"/>
</dbReference>
<dbReference type="SUPFAM" id="SSF48317">
    <property type="entry name" value="Acid phosphatase/Vanadium-dependent haloperoxidase"/>
    <property type="match status" value="1"/>
</dbReference>
<name>DOPP1_MOUSE</name>
<proteinExistence type="evidence at transcript level"/>
<feature type="chain" id="PRO_0000215627" description="Dolichyldiphosphatase 1">
    <location>
        <begin position="1"/>
        <end position="238"/>
    </location>
</feature>
<feature type="transmembrane region" description="Helical" evidence="1">
    <location>
        <begin position="33"/>
        <end position="53"/>
    </location>
</feature>
<feature type="transmembrane region" description="Helical" evidence="1">
    <location>
        <begin position="100"/>
        <end position="120"/>
    </location>
</feature>
<feature type="transmembrane region" description="Helical" evidence="1">
    <location>
        <begin position="130"/>
        <end position="150"/>
    </location>
</feature>
<feature type="transmembrane region" description="Helical" evidence="1">
    <location>
        <begin position="162"/>
        <end position="182"/>
    </location>
</feature>
<feature type="sequence conflict" description="In Ref. 3; AAH26544." evidence="3" ref="3">
    <original>V</original>
    <variation>A</variation>
    <location>
        <position position="93"/>
    </location>
</feature>
<feature type="sequence conflict" description="In Ref. 2; BAB27187." evidence="3" ref="2">
    <original>L</original>
    <variation>S</variation>
    <location>
        <position position="174"/>
    </location>
</feature>
<evidence type="ECO:0000255" key="1"/>
<evidence type="ECO:0000269" key="2">
    <source>
    </source>
</evidence>
<evidence type="ECO:0000305" key="3"/>
<evidence type="ECO:0000312" key="4">
    <source>
        <dbReference type="EMBL" id="AAH26544.1"/>
    </source>
</evidence>
<evidence type="ECO:0000312" key="5">
    <source>
        <dbReference type="EMBL" id="BAA92753.1"/>
    </source>
</evidence>
<protein>
    <recommendedName>
        <fullName>Dolichyldiphosphatase 1</fullName>
        <ecNumber>3.6.1.43</ecNumber>
    </recommendedName>
    <alternativeName>
        <fullName>Dolichyl pyrophosphate phosphatase 1</fullName>
    </alternativeName>
    <alternativeName>
        <fullName>Protein 2-23</fullName>
    </alternativeName>
</protein>
<comment type="function">
    <text evidence="2">Required for efficient N-glycosylation. Necessary for maintaining optimal levels of dolichol-linked oligosaccharides. Hydrolyzes dolichyl pyrophosphate at a very high rate and dolichyl monophosphate at a much lower rate. Does not act on phosphatidate.</text>
</comment>
<comment type="catalytic activity">
    <reaction evidence="2">
        <text>a di-trans,poly-cis-dolichyl diphosphate + H2O = a di-trans,poly-cis-dolichyl phosphate + phosphate + H(+)</text>
        <dbReference type="Rhea" id="RHEA:14385"/>
        <dbReference type="Rhea" id="RHEA-COMP:19498"/>
        <dbReference type="Rhea" id="RHEA-COMP:19506"/>
        <dbReference type="ChEBI" id="CHEBI:15377"/>
        <dbReference type="ChEBI" id="CHEBI:15378"/>
        <dbReference type="ChEBI" id="CHEBI:43474"/>
        <dbReference type="ChEBI" id="CHEBI:57497"/>
        <dbReference type="ChEBI" id="CHEBI:57683"/>
        <dbReference type="EC" id="3.6.1.43"/>
    </reaction>
</comment>
<comment type="pathway">
    <text>Protein modification; protein glycosylation.</text>
</comment>
<comment type="subcellular location">
    <subcellularLocation>
        <location evidence="2">Endoplasmic reticulum membrane</location>
        <topology evidence="2">Multi-pass membrane protein</topology>
    </subcellularLocation>
</comment>
<comment type="tissue specificity">
    <text evidence="2">Widely expressed with highest levels in brain, kidney, lung and intestine.</text>
</comment>
<comment type="similarity">
    <text evidence="3">Belongs to the dolichyldiphosphatase family.</text>
</comment>
<gene>
    <name type="primary">Dolpp1</name>
</gene>
<organism evidence="5">
    <name type="scientific">Mus musculus</name>
    <name type="common">Mouse</name>
    <dbReference type="NCBI Taxonomy" id="10090"/>
    <lineage>
        <taxon>Eukaryota</taxon>
        <taxon>Metazoa</taxon>
        <taxon>Chordata</taxon>
        <taxon>Craniata</taxon>
        <taxon>Vertebrata</taxon>
        <taxon>Euteleostomi</taxon>
        <taxon>Mammalia</taxon>
        <taxon>Eutheria</taxon>
        <taxon>Euarchontoglires</taxon>
        <taxon>Glires</taxon>
        <taxon>Rodentia</taxon>
        <taxon>Myomorpha</taxon>
        <taxon>Muroidea</taxon>
        <taxon>Muridae</taxon>
        <taxon>Murinae</taxon>
        <taxon>Mus</taxon>
        <taxon>Mus</taxon>
    </lineage>
</organism>